<reference key="1">
    <citation type="journal article" date="2008" name="Environ. Microbiol.">
        <title>The genome of Erwinia tasmaniensis strain Et1/99, a non-pathogenic bacterium in the genus Erwinia.</title>
        <authorList>
            <person name="Kube M."/>
            <person name="Migdoll A.M."/>
            <person name="Mueller I."/>
            <person name="Kuhl H."/>
            <person name="Beck A."/>
            <person name="Reinhardt R."/>
            <person name="Geider K."/>
        </authorList>
    </citation>
    <scope>NUCLEOTIDE SEQUENCE [LARGE SCALE GENOMIC DNA]</scope>
    <source>
        <strain>DSM 17950 / CFBP 7177 / CIP 109463 / NCPPB 4357 / Et1/99</strain>
    </source>
</reference>
<dbReference type="EC" id="1.1.1.17" evidence="1"/>
<dbReference type="EMBL" id="CU468135">
    <property type="protein sequence ID" value="CAO98465.1"/>
    <property type="molecule type" value="Genomic_DNA"/>
</dbReference>
<dbReference type="RefSeq" id="WP_012443088.1">
    <property type="nucleotide sequence ID" value="NC_010694.1"/>
</dbReference>
<dbReference type="SMR" id="B2VCH7"/>
<dbReference type="STRING" id="465817.ETA_34190"/>
<dbReference type="KEGG" id="eta:ETA_34190"/>
<dbReference type="eggNOG" id="COG0246">
    <property type="taxonomic scope" value="Bacteria"/>
</dbReference>
<dbReference type="HOGENOM" id="CLU_036089_2_0_6"/>
<dbReference type="OrthoDB" id="271711at2"/>
<dbReference type="Proteomes" id="UP000001726">
    <property type="component" value="Chromosome"/>
</dbReference>
<dbReference type="GO" id="GO:0005829">
    <property type="term" value="C:cytosol"/>
    <property type="evidence" value="ECO:0007669"/>
    <property type="project" value="TreeGrafter"/>
</dbReference>
<dbReference type="GO" id="GO:0008926">
    <property type="term" value="F:mannitol-1-phosphate 5-dehydrogenase activity"/>
    <property type="evidence" value="ECO:0007669"/>
    <property type="project" value="UniProtKB-UniRule"/>
</dbReference>
<dbReference type="GO" id="GO:0019592">
    <property type="term" value="P:mannitol catabolic process"/>
    <property type="evidence" value="ECO:0007669"/>
    <property type="project" value="TreeGrafter"/>
</dbReference>
<dbReference type="FunFam" id="1.10.1040.10:FF:000009">
    <property type="entry name" value="Mannitol-1-phosphate 5-dehydrogenase"/>
    <property type="match status" value="1"/>
</dbReference>
<dbReference type="FunFam" id="3.40.50.720:FF:000075">
    <property type="entry name" value="Mannitol-1-phosphate 5-dehydrogenase"/>
    <property type="match status" value="1"/>
</dbReference>
<dbReference type="Gene3D" id="1.10.1040.10">
    <property type="entry name" value="N-(1-d-carboxylethyl)-l-norvaline Dehydrogenase, domain 2"/>
    <property type="match status" value="1"/>
</dbReference>
<dbReference type="Gene3D" id="3.40.50.720">
    <property type="entry name" value="NAD(P)-binding Rossmann-like Domain"/>
    <property type="match status" value="1"/>
</dbReference>
<dbReference type="HAMAP" id="MF_00196">
    <property type="entry name" value="Mannitol_dehydrog"/>
    <property type="match status" value="1"/>
</dbReference>
<dbReference type="InterPro" id="IPR008927">
    <property type="entry name" value="6-PGluconate_DH-like_C_sf"/>
</dbReference>
<dbReference type="InterPro" id="IPR013328">
    <property type="entry name" value="6PGD_dom2"/>
</dbReference>
<dbReference type="InterPro" id="IPR023028">
    <property type="entry name" value="Mannitol_1_phos_5_DH"/>
</dbReference>
<dbReference type="InterPro" id="IPR000669">
    <property type="entry name" value="Mannitol_DH"/>
</dbReference>
<dbReference type="InterPro" id="IPR013118">
    <property type="entry name" value="Mannitol_DH_C"/>
</dbReference>
<dbReference type="InterPro" id="IPR023027">
    <property type="entry name" value="Mannitol_DH_CS"/>
</dbReference>
<dbReference type="InterPro" id="IPR013131">
    <property type="entry name" value="Mannitol_DH_N"/>
</dbReference>
<dbReference type="InterPro" id="IPR036291">
    <property type="entry name" value="NAD(P)-bd_dom_sf"/>
</dbReference>
<dbReference type="NCBIfam" id="NF002646">
    <property type="entry name" value="PRK02318.1-2"/>
    <property type="match status" value="1"/>
</dbReference>
<dbReference type="NCBIfam" id="NF002647">
    <property type="entry name" value="PRK02318.1-3"/>
    <property type="match status" value="1"/>
</dbReference>
<dbReference type="NCBIfam" id="NF002650">
    <property type="entry name" value="PRK02318.2-2"/>
    <property type="match status" value="1"/>
</dbReference>
<dbReference type="NCBIfam" id="NF002652">
    <property type="entry name" value="PRK02318.2-5"/>
    <property type="match status" value="1"/>
</dbReference>
<dbReference type="PANTHER" id="PTHR30524:SF0">
    <property type="entry name" value="ALTRONATE OXIDOREDUCTASE-RELATED"/>
    <property type="match status" value="1"/>
</dbReference>
<dbReference type="PANTHER" id="PTHR30524">
    <property type="entry name" value="MANNITOL-1-PHOSPHATE 5-DEHYDROGENASE"/>
    <property type="match status" value="1"/>
</dbReference>
<dbReference type="Pfam" id="PF01232">
    <property type="entry name" value="Mannitol_dh"/>
    <property type="match status" value="1"/>
</dbReference>
<dbReference type="Pfam" id="PF08125">
    <property type="entry name" value="Mannitol_dh_C"/>
    <property type="match status" value="1"/>
</dbReference>
<dbReference type="PRINTS" id="PR00084">
    <property type="entry name" value="MTLDHDRGNASE"/>
</dbReference>
<dbReference type="SUPFAM" id="SSF48179">
    <property type="entry name" value="6-phosphogluconate dehydrogenase C-terminal domain-like"/>
    <property type="match status" value="1"/>
</dbReference>
<dbReference type="SUPFAM" id="SSF51735">
    <property type="entry name" value="NAD(P)-binding Rossmann-fold domains"/>
    <property type="match status" value="1"/>
</dbReference>
<dbReference type="PROSITE" id="PS00974">
    <property type="entry name" value="MANNITOL_DHGENASE"/>
    <property type="match status" value="1"/>
</dbReference>
<gene>
    <name evidence="1" type="primary">mtlD</name>
    <name type="ordered locus">ETA_34190</name>
</gene>
<organism>
    <name type="scientific">Erwinia tasmaniensis (strain DSM 17950 / CFBP 7177 / CIP 109463 / NCPPB 4357 / Et1/99)</name>
    <dbReference type="NCBI Taxonomy" id="465817"/>
    <lineage>
        <taxon>Bacteria</taxon>
        <taxon>Pseudomonadati</taxon>
        <taxon>Pseudomonadota</taxon>
        <taxon>Gammaproteobacteria</taxon>
        <taxon>Enterobacterales</taxon>
        <taxon>Erwiniaceae</taxon>
        <taxon>Erwinia</taxon>
    </lineage>
</organism>
<protein>
    <recommendedName>
        <fullName evidence="1">Mannitol-1-phosphate 5-dehydrogenase</fullName>
        <ecNumber evidence="1">1.1.1.17</ecNumber>
    </recommendedName>
</protein>
<accession>B2VCH7</accession>
<evidence type="ECO:0000255" key="1">
    <source>
        <dbReference type="HAMAP-Rule" id="MF_00196"/>
    </source>
</evidence>
<sequence>MKALHFGAGNIGRGFIGKLLADAGVQLTFADVNQAVLDALNARGTYPVHVVGEQAQIEIVNGVNAVHSSSDDIIALIAEVDIVTTAVGPQILERIAAGMAQGIAKRSDNANSRPLNIIACENMVRGTTQLKAHVLKALPERYHAWLEEHVGFVDSAVDRIVPPSAADSSDPLEVTVETFSEWIVDKTQFKGEPPTIPGMELTDNLMAFVERKLFTLNTGHAIAAYLGQLAGHKTIREAIMDKKVRAIVQGAMEESGAVLIKRYGFAADKHAAYIQKIINRFENPYLIDDVERVGRQPLRKLSAGDRLIKPTLGTLEYHLPNNNLVTGIAAALLYRNEGDPQAIELAGLLSRQDVATTLVHISGLDKDSDVVKAVVKAVNALA</sequence>
<comment type="catalytic activity">
    <reaction evidence="1">
        <text>D-mannitol 1-phosphate + NAD(+) = beta-D-fructose 6-phosphate + NADH + H(+)</text>
        <dbReference type="Rhea" id="RHEA:19661"/>
        <dbReference type="ChEBI" id="CHEBI:15378"/>
        <dbReference type="ChEBI" id="CHEBI:57540"/>
        <dbReference type="ChEBI" id="CHEBI:57634"/>
        <dbReference type="ChEBI" id="CHEBI:57945"/>
        <dbReference type="ChEBI" id="CHEBI:61381"/>
        <dbReference type="EC" id="1.1.1.17"/>
    </reaction>
</comment>
<comment type="similarity">
    <text evidence="1">Belongs to the mannitol dehydrogenase family.</text>
</comment>
<keyword id="KW-0520">NAD</keyword>
<keyword id="KW-0560">Oxidoreductase</keyword>
<keyword id="KW-1185">Reference proteome</keyword>
<feature type="chain" id="PRO_1000099192" description="Mannitol-1-phosphate 5-dehydrogenase">
    <location>
        <begin position="1"/>
        <end position="382"/>
    </location>
</feature>
<feature type="binding site" evidence="1">
    <location>
        <begin position="3"/>
        <end position="14"/>
    </location>
    <ligand>
        <name>NAD(+)</name>
        <dbReference type="ChEBI" id="CHEBI:57540"/>
    </ligand>
</feature>
<proteinExistence type="inferred from homology"/>
<name>MTLD_ERWT9</name>